<name>THIE_NITEC</name>
<organism>
    <name type="scientific">Nitrosomonas eutropha (strain DSM 101675 / C91 / Nm57)</name>
    <dbReference type="NCBI Taxonomy" id="335283"/>
    <lineage>
        <taxon>Bacteria</taxon>
        <taxon>Pseudomonadati</taxon>
        <taxon>Pseudomonadota</taxon>
        <taxon>Betaproteobacteria</taxon>
        <taxon>Nitrosomonadales</taxon>
        <taxon>Nitrosomonadaceae</taxon>
        <taxon>Nitrosomonas</taxon>
    </lineage>
</organism>
<reference key="1">
    <citation type="journal article" date="2007" name="Environ. Microbiol.">
        <title>Whole-genome analysis of the ammonia-oxidizing bacterium, Nitrosomonas eutropha C91: implications for niche adaptation.</title>
        <authorList>
            <person name="Stein L.Y."/>
            <person name="Arp D.J."/>
            <person name="Berube P.M."/>
            <person name="Chain P.S."/>
            <person name="Hauser L."/>
            <person name="Jetten M.S."/>
            <person name="Klotz M.G."/>
            <person name="Larimer F.W."/>
            <person name="Norton J.M."/>
            <person name="Op den Camp H.J.M."/>
            <person name="Shin M."/>
            <person name="Wei X."/>
        </authorList>
    </citation>
    <scope>NUCLEOTIDE SEQUENCE [LARGE SCALE GENOMIC DNA]</scope>
    <source>
        <strain>DSM 101675 / C91 / Nm57</strain>
    </source>
</reference>
<keyword id="KW-0460">Magnesium</keyword>
<keyword id="KW-0479">Metal-binding</keyword>
<keyword id="KW-0784">Thiamine biosynthesis</keyword>
<keyword id="KW-0808">Transferase</keyword>
<protein>
    <recommendedName>
        <fullName evidence="1">Thiamine-phosphate synthase</fullName>
        <shortName evidence="1">TP synthase</shortName>
        <shortName evidence="1">TPS</shortName>
        <ecNumber evidence="1">2.5.1.3</ecNumber>
    </recommendedName>
    <alternativeName>
        <fullName evidence="1">Thiamine-phosphate pyrophosphorylase</fullName>
        <shortName evidence="1">TMP pyrophosphorylase</shortName>
        <shortName evidence="1">TMP-PPase</shortName>
    </alternativeName>
</protein>
<evidence type="ECO:0000255" key="1">
    <source>
        <dbReference type="HAMAP-Rule" id="MF_00097"/>
    </source>
</evidence>
<gene>
    <name evidence="1" type="primary">thiE</name>
    <name type="ordered locus">Neut_1538</name>
</gene>
<comment type="function">
    <text evidence="1">Condenses 4-methyl-5-(beta-hydroxyethyl)thiazole monophosphate (THZ-P) and 2-methyl-4-amino-5-hydroxymethyl pyrimidine pyrophosphate (HMP-PP) to form thiamine monophosphate (TMP).</text>
</comment>
<comment type="catalytic activity">
    <reaction evidence="1">
        <text>2-[(2R,5Z)-2-carboxy-4-methylthiazol-5(2H)-ylidene]ethyl phosphate + 4-amino-2-methyl-5-(diphosphooxymethyl)pyrimidine + 2 H(+) = thiamine phosphate + CO2 + diphosphate</text>
        <dbReference type="Rhea" id="RHEA:47844"/>
        <dbReference type="ChEBI" id="CHEBI:15378"/>
        <dbReference type="ChEBI" id="CHEBI:16526"/>
        <dbReference type="ChEBI" id="CHEBI:33019"/>
        <dbReference type="ChEBI" id="CHEBI:37575"/>
        <dbReference type="ChEBI" id="CHEBI:57841"/>
        <dbReference type="ChEBI" id="CHEBI:62899"/>
        <dbReference type="EC" id="2.5.1.3"/>
    </reaction>
</comment>
<comment type="catalytic activity">
    <reaction evidence="1">
        <text>2-(2-carboxy-4-methylthiazol-5-yl)ethyl phosphate + 4-amino-2-methyl-5-(diphosphooxymethyl)pyrimidine + 2 H(+) = thiamine phosphate + CO2 + diphosphate</text>
        <dbReference type="Rhea" id="RHEA:47848"/>
        <dbReference type="ChEBI" id="CHEBI:15378"/>
        <dbReference type="ChEBI" id="CHEBI:16526"/>
        <dbReference type="ChEBI" id="CHEBI:33019"/>
        <dbReference type="ChEBI" id="CHEBI:37575"/>
        <dbReference type="ChEBI" id="CHEBI:57841"/>
        <dbReference type="ChEBI" id="CHEBI:62890"/>
        <dbReference type="EC" id="2.5.1.3"/>
    </reaction>
</comment>
<comment type="catalytic activity">
    <reaction evidence="1">
        <text>4-methyl-5-(2-phosphooxyethyl)-thiazole + 4-amino-2-methyl-5-(diphosphooxymethyl)pyrimidine + H(+) = thiamine phosphate + diphosphate</text>
        <dbReference type="Rhea" id="RHEA:22328"/>
        <dbReference type="ChEBI" id="CHEBI:15378"/>
        <dbReference type="ChEBI" id="CHEBI:33019"/>
        <dbReference type="ChEBI" id="CHEBI:37575"/>
        <dbReference type="ChEBI" id="CHEBI:57841"/>
        <dbReference type="ChEBI" id="CHEBI:58296"/>
        <dbReference type="EC" id="2.5.1.3"/>
    </reaction>
</comment>
<comment type="cofactor">
    <cofactor evidence="1">
        <name>Mg(2+)</name>
        <dbReference type="ChEBI" id="CHEBI:18420"/>
    </cofactor>
    <text evidence="1">Binds 1 Mg(2+) ion per subunit.</text>
</comment>
<comment type="pathway">
    <text evidence="1">Cofactor biosynthesis; thiamine diphosphate biosynthesis; thiamine phosphate from 4-amino-2-methyl-5-diphosphomethylpyrimidine and 4-methyl-5-(2-phosphoethyl)-thiazole: step 1/1.</text>
</comment>
<comment type="similarity">
    <text evidence="1">Belongs to the thiamine-phosphate synthase family.</text>
</comment>
<proteinExistence type="inferred from homology"/>
<sequence>MIDPPMDRIKVSGLYAITPDIENIDRLCEMAYHVLAGGVSWLQYRNKKANSRLRLMQALEIHLLCKQFQVPLIINDHMDLVMEIDAEGLHVGGEDTSVAAARHYLGRNKIIGVSCYNQLSHAIEAEKAGADYVAFGAFYPSMTKVDAYQAPIHLLDAAKKTLNIPIVAIGGINLDNAEALIARGCDAVAVSQALFSAQDIQSAARHFSKLFC</sequence>
<dbReference type="EC" id="2.5.1.3" evidence="1"/>
<dbReference type="EMBL" id="CP000450">
    <property type="protein sequence ID" value="ABI59782.1"/>
    <property type="molecule type" value="Genomic_DNA"/>
</dbReference>
<dbReference type="RefSeq" id="WP_011634588.1">
    <property type="nucleotide sequence ID" value="NC_008344.1"/>
</dbReference>
<dbReference type="SMR" id="Q0AFV0"/>
<dbReference type="STRING" id="335283.Neut_1538"/>
<dbReference type="KEGG" id="net:Neut_1538"/>
<dbReference type="eggNOG" id="COG0352">
    <property type="taxonomic scope" value="Bacteria"/>
</dbReference>
<dbReference type="HOGENOM" id="CLU_018272_3_1_4"/>
<dbReference type="OrthoDB" id="9810880at2"/>
<dbReference type="UniPathway" id="UPA00060">
    <property type="reaction ID" value="UER00141"/>
</dbReference>
<dbReference type="Proteomes" id="UP000001966">
    <property type="component" value="Chromosome"/>
</dbReference>
<dbReference type="GO" id="GO:0005737">
    <property type="term" value="C:cytoplasm"/>
    <property type="evidence" value="ECO:0007669"/>
    <property type="project" value="TreeGrafter"/>
</dbReference>
<dbReference type="GO" id="GO:0000287">
    <property type="term" value="F:magnesium ion binding"/>
    <property type="evidence" value="ECO:0007669"/>
    <property type="project" value="UniProtKB-UniRule"/>
</dbReference>
<dbReference type="GO" id="GO:0004789">
    <property type="term" value="F:thiamine-phosphate diphosphorylase activity"/>
    <property type="evidence" value="ECO:0007669"/>
    <property type="project" value="UniProtKB-UniRule"/>
</dbReference>
<dbReference type="GO" id="GO:0009228">
    <property type="term" value="P:thiamine biosynthetic process"/>
    <property type="evidence" value="ECO:0007669"/>
    <property type="project" value="UniProtKB-KW"/>
</dbReference>
<dbReference type="GO" id="GO:0009229">
    <property type="term" value="P:thiamine diphosphate biosynthetic process"/>
    <property type="evidence" value="ECO:0007669"/>
    <property type="project" value="UniProtKB-UniRule"/>
</dbReference>
<dbReference type="CDD" id="cd00564">
    <property type="entry name" value="TMP_TenI"/>
    <property type="match status" value="1"/>
</dbReference>
<dbReference type="FunFam" id="3.20.20.70:FF:000096">
    <property type="entry name" value="Thiamine-phosphate synthase"/>
    <property type="match status" value="1"/>
</dbReference>
<dbReference type="Gene3D" id="3.20.20.70">
    <property type="entry name" value="Aldolase class I"/>
    <property type="match status" value="1"/>
</dbReference>
<dbReference type="HAMAP" id="MF_00097">
    <property type="entry name" value="TMP_synthase"/>
    <property type="match status" value="1"/>
</dbReference>
<dbReference type="InterPro" id="IPR013785">
    <property type="entry name" value="Aldolase_TIM"/>
</dbReference>
<dbReference type="InterPro" id="IPR036206">
    <property type="entry name" value="ThiamineP_synth_sf"/>
</dbReference>
<dbReference type="InterPro" id="IPR022998">
    <property type="entry name" value="ThiamineP_synth_TenI"/>
</dbReference>
<dbReference type="InterPro" id="IPR034291">
    <property type="entry name" value="TMP_synthase"/>
</dbReference>
<dbReference type="NCBIfam" id="TIGR00693">
    <property type="entry name" value="thiE"/>
    <property type="match status" value="1"/>
</dbReference>
<dbReference type="PANTHER" id="PTHR20857">
    <property type="entry name" value="THIAMINE-PHOSPHATE PYROPHOSPHORYLASE"/>
    <property type="match status" value="1"/>
</dbReference>
<dbReference type="PANTHER" id="PTHR20857:SF15">
    <property type="entry name" value="THIAMINE-PHOSPHATE SYNTHASE"/>
    <property type="match status" value="1"/>
</dbReference>
<dbReference type="Pfam" id="PF02581">
    <property type="entry name" value="TMP-TENI"/>
    <property type="match status" value="1"/>
</dbReference>
<dbReference type="SUPFAM" id="SSF51391">
    <property type="entry name" value="Thiamin phosphate synthase"/>
    <property type="match status" value="1"/>
</dbReference>
<feature type="chain" id="PRO_0000336416" description="Thiamine-phosphate synthase">
    <location>
        <begin position="1"/>
        <end position="212"/>
    </location>
</feature>
<feature type="binding site" evidence="1">
    <location>
        <begin position="43"/>
        <end position="47"/>
    </location>
    <ligand>
        <name>4-amino-2-methyl-5-(diphosphooxymethyl)pyrimidine</name>
        <dbReference type="ChEBI" id="CHEBI:57841"/>
    </ligand>
</feature>
<feature type="binding site" evidence="1">
    <location>
        <position position="75"/>
    </location>
    <ligand>
        <name>4-amino-2-methyl-5-(diphosphooxymethyl)pyrimidine</name>
        <dbReference type="ChEBI" id="CHEBI:57841"/>
    </ligand>
</feature>
<feature type="binding site" evidence="1">
    <location>
        <position position="76"/>
    </location>
    <ligand>
        <name>Mg(2+)</name>
        <dbReference type="ChEBI" id="CHEBI:18420"/>
    </ligand>
</feature>
<feature type="binding site" evidence="1">
    <location>
        <position position="95"/>
    </location>
    <ligand>
        <name>Mg(2+)</name>
        <dbReference type="ChEBI" id="CHEBI:18420"/>
    </ligand>
</feature>
<feature type="binding site" evidence="1">
    <location>
        <position position="114"/>
    </location>
    <ligand>
        <name>4-amino-2-methyl-5-(diphosphooxymethyl)pyrimidine</name>
        <dbReference type="ChEBI" id="CHEBI:57841"/>
    </ligand>
</feature>
<feature type="binding site" evidence="1">
    <location>
        <begin position="141"/>
        <end position="143"/>
    </location>
    <ligand>
        <name>2-[(2R,5Z)-2-carboxy-4-methylthiazol-5(2H)-ylidene]ethyl phosphate</name>
        <dbReference type="ChEBI" id="CHEBI:62899"/>
    </ligand>
</feature>
<feature type="binding site" evidence="1">
    <location>
        <position position="144"/>
    </location>
    <ligand>
        <name>4-amino-2-methyl-5-(diphosphooxymethyl)pyrimidine</name>
        <dbReference type="ChEBI" id="CHEBI:57841"/>
    </ligand>
</feature>
<feature type="binding site" evidence="1">
    <location>
        <position position="171"/>
    </location>
    <ligand>
        <name>2-[(2R,5Z)-2-carboxy-4-methylthiazol-5(2H)-ylidene]ethyl phosphate</name>
        <dbReference type="ChEBI" id="CHEBI:62899"/>
    </ligand>
</feature>
<accession>Q0AFV0</accession>